<evidence type="ECO:0000255" key="1">
    <source>
        <dbReference type="HAMAP-Rule" id="MF_00198"/>
    </source>
</evidence>
<evidence type="ECO:0000269" key="2">
    <source>
    </source>
</evidence>
<evidence type="ECO:0000269" key="3">
    <source>
    </source>
</evidence>
<evidence type="ECO:0000269" key="4">
    <source>
    </source>
</evidence>
<evidence type="ECO:0000303" key="5">
    <source>
    </source>
</evidence>
<evidence type="ECO:0000305" key="6">
    <source>
    </source>
</evidence>
<proteinExistence type="evidence at protein level"/>
<sequence length="301" mass="34854">MFGWHWLLEWQTPYEFHGHLIEKVLAEEKTPYQHVTLVEFTRFGKGLIIDGKVQSTLYDEHIYHELLVHPLLLSLTKPPKSVLILGGGEGATLREVLKYKSVEKAVMVDIDEKVIEFAKKYLYEWHQGAFEDKRTNLVITDGLKFIKETKEKYDAIILDLTDPIKNSTSYMLYTKEFYEKLREILNERGGIVTQATSPSFSLEVYVTIYNTIKEVFKEASASYTYMASFDGLWGFVYGGVRPDLLSEDEVDSKINERIDGQLRFYDGYSHKISFSLPKNIKSEFQKITKISTEKDPIYVPA</sequence>
<organism>
    <name type="scientific">Saccharolobus solfataricus (strain ATCC 35092 / DSM 1617 / JCM 11322 / P2)</name>
    <name type="common">Sulfolobus solfataricus</name>
    <dbReference type="NCBI Taxonomy" id="273057"/>
    <lineage>
        <taxon>Archaea</taxon>
        <taxon>Thermoproteota</taxon>
        <taxon>Thermoprotei</taxon>
        <taxon>Sulfolobales</taxon>
        <taxon>Sulfolobaceae</taxon>
        <taxon>Saccharolobus</taxon>
    </lineage>
</organism>
<comment type="function">
    <text evidence="4">Involved in the biosynthesis of polyamines which are thought to support the growth of thermophilic microorganisms under high-temperature conditions. It seems that long-chain and branched-chain of polyamines effectively stabilize DNA and RNA, respectively. Catalyzes the irreversible transfer of a propylamine group from the amino donor S-adenosylmethioninamine (decarboxy-AdoMet) to various amine acceptors such as putrescine (1,4-diaminobutane), 1,3-diaminopropane, sym-norspermidine and spermidine. The biosynthesis of caldopentamine from norspermine has been also observed, but with a very low activity. The reaction involves a nucleophilic attack on the C-3 methylene of the propylamine moiety adjacent to the positively charged sulfur of decarboxy-AdoMet. S-adenosylmethioninamine is the only amino donor.</text>
</comment>
<comment type="catalytic activity">
    <reaction evidence="1 4">
        <text>S-adenosyl 3-(methylsulfanyl)propylamine + putrescine = S-methyl-5'-thioadenosine + spermidine + H(+)</text>
        <dbReference type="Rhea" id="RHEA:12721"/>
        <dbReference type="ChEBI" id="CHEBI:15378"/>
        <dbReference type="ChEBI" id="CHEBI:17509"/>
        <dbReference type="ChEBI" id="CHEBI:57443"/>
        <dbReference type="ChEBI" id="CHEBI:57834"/>
        <dbReference type="ChEBI" id="CHEBI:326268"/>
        <dbReference type="EC" id="2.5.1.16"/>
    </reaction>
</comment>
<comment type="catalytic activity">
    <reaction evidence="4">
        <text>S-adenosyl 3-(methylsulfanyl)propylamine + propane-1,3-diamine = norspermidine + S-methyl-5'-thioadenosine + H(+)</text>
        <dbReference type="Rhea" id="RHEA:23244"/>
        <dbReference type="ChEBI" id="CHEBI:15378"/>
        <dbReference type="ChEBI" id="CHEBI:17509"/>
        <dbReference type="ChEBI" id="CHEBI:57443"/>
        <dbReference type="ChEBI" id="CHEBI:57484"/>
        <dbReference type="ChEBI" id="CHEBI:57920"/>
        <dbReference type="EC" id="2.5.1.23"/>
    </reaction>
</comment>
<comment type="catalytic activity">
    <reaction evidence="4">
        <text>norspermidine + S-adenosyl 3-(methylsulfanyl)propylamine = norspermine + S-methyl-5'-thioadenosine + H(+)</text>
        <dbReference type="Rhea" id="RHEA:42864"/>
        <dbReference type="ChEBI" id="CHEBI:15378"/>
        <dbReference type="ChEBI" id="CHEBI:17509"/>
        <dbReference type="ChEBI" id="CHEBI:57443"/>
        <dbReference type="ChEBI" id="CHEBI:57920"/>
        <dbReference type="ChEBI" id="CHEBI:58704"/>
        <dbReference type="EC" id="2.5.1.126"/>
    </reaction>
</comment>
<comment type="catalytic activity">
    <reaction evidence="4">
        <text>S-adenosyl 3-(methylsulfanyl)propylamine + spermidine = thermospermine + S-methyl-5'-thioadenosine + H(+)</text>
        <dbReference type="Rhea" id="RHEA:30515"/>
        <dbReference type="ChEBI" id="CHEBI:15378"/>
        <dbReference type="ChEBI" id="CHEBI:17509"/>
        <dbReference type="ChEBI" id="CHEBI:57443"/>
        <dbReference type="ChEBI" id="CHEBI:57834"/>
        <dbReference type="ChEBI" id="CHEBI:59903"/>
        <dbReference type="EC" id="2.5.1.79"/>
    </reaction>
</comment>
<comment type="activity regulation">
    <text evidence="4">Competitively inhibited by 5-methylthioadenosine, 5-methylthiotubercidin, S-adenosyl(5)-3-thiopropylamine and S-adenosyl-3-thio-l,8-diaminooctane.</text>
</comment>
<comment type="biophysicochemical properties">
    <kinetics>
        <KM evidence="4">7.9 uM for S-adenosylmethioninamine (at 78 degrees Celsius and at pH 7.5)</KM>
        <KM evidence="4">954 uM for sym-nor-spermidine (at 78 degrees Celsius and at pH 7.5)</KM>
        <KM evidence="2 3 4">1539 uM for spermidine (at 78 degrees Celsius and at pH 7.5)</KM>
        <KM evidence="4">1675 uM for 1,3-diaminopropane (at 78 degrees Celsius and at pH 7.5)</KM>
        <KM evidence="4">3850 uM for putrescine (at 78 degrees Celsius and at pH 7.5)</KM>
        <Vmax evidence="4">1980.0 nmol/min/mg enzyme with 1,3-diaminopropane as substrate (at 78 degrees Celsius and at pH 7.5)</Vmax>
        <Vmax evidence="4">662.0 nmol/min/mg enzyme with putrescine as substrate (at 78 degrees Celsius and at pH 7.5)</Vmax>
        <Vmax evidence="4">316.0 nmol/min/mg enzyme with sym-nor-spermidine as substrate (at 78 degrees Celsius and at pH 7.5)</Vmax>
        <Vmax evidence="4">124.0 nmol/min/mg enzyme with spermidine as substrate (at 78 degrees Celsius and at pH 7.5)</Vmax>
    </kinetics>
    <phDependence>
        <text evidence="4">Optimum pH is 7.5 with one-half of the maximal activity at pH 6 and 9.5.</text>
    </phDependence>
    <temperatureDependence>
        <text evidence="4">Optimum temperature is 90 degrees Celsius. No loss of activity is observable even after exposure of the purified enzyme to 100 degrees Celsius for 1 hour. At 60 and 110 degrees Celsius the reaction rate is one-half of the maximal value, and a residual 20% activity is still observable at 120 degrees Celsius.</text>
    </temperatureDependence>
</comment>
<comment type="pathway">
    <text evidence="1">Amine and polyamine biosynthesis; spermidine biosynthesis; spermidine from putrescine: step 1/1.</text>
</comment>
<comment type="subunit">
    <text evidence="2 4">Homotrimer.</text>
</comment>
<comment type="subcellular location">
    <subcellularLocation>
        <location evidence="1">Cytoplasm</location>
    </subcellularLocation>
</comment>
<comment type="similarity">
    <text evidence="1">Belongs to the spermidine/spermine synthase family.</text>
</comment>
<dbReference type="EC" id="2.5.1.23" evidence="4"/>
<dbReference type="EC" id="2.5.1.126" evidence="4"/>
<dbReference type="EC" id="2.5.1.16" evidence="1 4"/>
<dbReference type="EC" id="2.5.1.79" evidence="4"/>
<dbReference type="EMBL" id="Y18930">
    <property type="protein sequence ID" value="CAB57546.1"/>
    <property type="molecule type" value="Genomic_DNA"/>
</dbReference>
<dbReference type="EMBL" id="AE006641">
    <property type="protein sequence ID" value="AAK41051.1"/>
    <property type="molecule type" value="Genomic_DNA"/>
</dbReference>
<dbReference type="PIR" id="D90224">
    <property type="entry name" value="D90224"/>
</dbReference>
<dbReference type="RefSeq" id="WP_009991336.1">
    <property type="nucleotide sequence ID" value="NC_002754.1"/>
</dbReference>
<dbReference type="SMR" id="Q9UXE4"/>
<dbReference type="FunCoup" id="Q9UXE4">
    <property type="interactions" value="227"/>
</dbReference>
<dbReference type="STRING" id="273057.SSO0757"/>
<dbReference type="PaxDb" id="273057-SSO0757"/>
<dbReference type="EnsemblBacteria" id="AAK41051">
    <property type="protein sequence ID" value="AAK41051"/>
    <property type="gene ID" value="SSO0757"/>
</dbReference>
<dbReference type="GeneID" id="44129755"/>
<dbReference type="KEGG" id="sso:SSO0757"/>
<dbReference type="PATRIC" id="fig|273057.12.peg.753"/>
<dbReference type="eggNOG" id="arCOG00050">
    <property type="taxonomic scope" value="Archaea"/>
</dbReference>
<dbReference type="HOGENOM" id="CLU_048199_0_1_2"/>
<dbReference type="InParanoid" id="Q9UXE4"/>
<dbReference type="PhylomeDB" id="Q9UXE4"/>
<dbReference type="UniPathway" id="UPA00248">
    <property type="reaction ID" value="UER00314"/>
</dbReference>
<dbReference type="Proteomes" id="UP000001974">
    <property type="component" value="Chromosome"/>
</dbReference>
<dbReference type="GO" id="GO:0005737">
    <property type="term" value="C:cytoplasm"/>
    <property type="evidence" value="ECO:0007669"/>
    <property type="project" value="UniProtKB-SubCell"/>
</dbReference>
<dbReference type="GO" id="GO:0004766">
    <property type="term" value="F:spermidine synthase activity"/>
    <property type="evidence" value="ECO:0000314"/>
    <property type="project" value="UniProtKB"/>
</dbReference>
<dbReference type="GO" id="GO:0050314">
    <property type="term" value="F:sym-norspermidine synthase activity"/>
    <property type="evidence" value="ECO:0000314"/>
    <property type="project" value="UniProtKB"/>
</dbReference>
<dbReference type="GO" id="GO:0010487">
    <property type="term" value="F:thermospermine synthase activity"/>
    <property type="evidence" value="ECO:0000314"/>
    <property type="project" value="UniProtKB"/>
</dbReference>
<dbReference type="GO" id="GO:0006596">
    <property type="term" value="P:polyamine biosynthetic process"/>
    <property type="evidence" value="ECO:0000314"/>
    <property type="project" value="UniProtKB"/>
</dbReference>
<dbReference type="GO" id="GO:0008295">
    <property type="term" value="P:spermidine biosynthetic process"/>
    <property type="evidence" value="ECO:0007669"/>
    <property type="project" value="UniProtKB-UniRule"/>
</dbReference>
<dbReference type="CDD" id="cd02440">
    <property type="entry name" value="AdoMet_MTases"/>
    <property type="match status" value="1"/>
</dbReference>
<dbReference type="FunFam" id="3.40.50.150:FF:000088">
    <property type="entry name" value="Polyamine aminopropyltransferase"/>
    <property type="match status" value="1"/>
</dbReference>
<dbReference type="Gene3D" id="2.30.140.10">
    <property type="entry name" value="Spermidine synthase, tetramerisation domain"/>
    <property type="match status" value="1"/>
</dbReference>
<dbReference type="Gene3D" id="3.40.50.150">
    <property type="entry name" value="Vaccinia Virus protein VP39"/>
    <property type="match status" value="1"/>
</dbReference>
<dbReference type="HAMAP" id="MF_00198">
    <property type="entry name" value="Spermidine_synth"/>
    <property type="match status" value="1"/>
</dbReference>
<dbReference type="InterPro" id="IPR030374">
    <property type="entry name" value="PABS"/>
</dbReference>
<dbReference type="InterPro" id="IPR030373">
    <property type="entry name" value="PABS_CS"/>
</dbReference>
<dbReference type="InterPro" id="IPR029063">
    <property type="entry name" value="SAM-dependent_MTases_sf"/>
</dbReference>
<dbReference type="InterPro" id="IPR001045">
    <property type="entry name" value="Spermi_synthase"/>
</dbReference>
<dbReference type="InterPro" id="IPR035246">
    <property type="entry name" value="Spermidine_synt_N"/>
</dbReference>
<dbReference type="InterPro" id="IPR037163">
    <property type="entry name" value="Spermidine_synt_N_sf"/>
</dbReference>
<dbReference type="NCBIfam" id="NF002010">
    <property type="entry name" value="PRK00811.1"/>
    <property type="match status" value="1"/>
</dbReference>
<dbReference type="PANTHER" id="PTHR43317">
    <property type="entry name" value="THERMOSPERMINE SYNTHASE ACAULIS5"/>
    <property type="match status" value="1"/>
</dbReference>
<dbReference type="PANTHER" id="PTHR43317:SF1">
    <property type="entry name" value="THERMOSPERMINE SYNTHASE ACAULIS5"/>
    <property type="match status" value="1"/>
</dbReference>
<dbReference type="Pfam" id="PF17284">
    <property type="entry name" value="Spermine_synt_N"/>
    <property type="match status" value="1"/>
</dbReference>
<dbReference type="Pfam" id="PF01564">
    <property type="entry name" value="Spermine_synth"/>
    <property type="match status" value="1"/>
</dbReference>
<dbReference type="SUPFAM" id="SSF53335">
    <property type="entry name" value="S-adenosyl-L-methionine-dependent methyltransferases"/>
    <property type="match status" value="1"/>
</dbReference>
<dbReference type="PROSITE" id="PS01330">
    <property type="entry name" value="PABS_1"/>
    <property type="match status" value="1"/>
</dbReference>
<dbReference type="PROSITE" id="PS51006">
    <property type="entry name" value="PABS_2"/>
    <property type="match status" value="1"/>
</dbReference>
<protein>
    <recommendedName>
        <fullName evidence="1 5">Polyamine aminopropyltransferase</fullName>
    </recommendedName>
    <alternativeName>
        <fullName evidence="6">1,3-diaminopropane aminopropyltransferase</fullName>
        <ecNumber evidence="4">2.5.1.23</ecNumber>
    </alternativeName>
    <alternativeName>
        <fullName evidence="6">Norspermidine aminopropyltransferase</fullName>
        <ecNumber evidence="4">2.5.1.126</ecNumber>
    </alternativeName>
    <alternativeName>
        <fullName evidence="6">Norspermine synthase</fullName>
    </alternativeName>
    <alternativeName>
        <fullName evidence="1 6">Putrescine aminopropyltransferase</fullName>
        <shortName evidence="1">PAPT</shortName>
        <ecNumber evidence="1 4">2.5.1.16</ecNumber>
    </alternativeName>
    <alternativeName>
        <fullName evidence="6">Spermidine aminopropyltransferase</fullName>
        <ecNumber evidence="4">2.5.1.79</ecNumber>
    </alternativeName>
    <alternativeName>
        <fullName evidence="1 6">Spermidine synthase</fullName>
        <shortName evidence="1">SPDS</shortName>
        <shortName evidence="1">SPDSY</shortName>
    </alternativeName>
    <alternativeName>
        <fullName evidence="6">Sym-norspermidine synthase</fullName>
    </alternativeName>
    <alternativeName>
        <fullName evidence="6">Thermospermine synthase</fullName>
    </alternativeName>
</protein>
<feature type="chain" id="PRO_0000156534" description="Polyamine aminopropyltransferase">
    <location>
        <begin position="1"/>
        <end position="301"/>
    </location>
</feature>
<feature type="domain" description="PABS" evidence="1">
    <location>
        <begin position="4"/>
        <end position="240"/>
    </location>
</feature>
<feature type="active site" description="Proton acceptor" evidence="1">
    <location>
        <position position="159"/>
    </location>
</feature>
<feature type="binding site" evidence="1">
    <location>
        <position position="33"/>
    </location>
    <ligand>
        <name>S-methyl-5'-thioadenosine</name>
        <dbReference type="ChEBI" id="CHEBI:17509"/>
    </ligand>
</feature>
<feature type="binding site" evidence="1">
    <location>
        <position position="64"/>
    </location>
    <ligand>
        <name>spermidine</name>
        <dbReference type="ChEBI" id="CHEBI:57834"/>
    </ligand>
</feature>
<feature type="binding site" evidence="1">
    <location>
        <position position="89"/>
    </location>
    <ligand>
        <name>spermidine</name>
        <dbReference type="ChEBI" id="CHEBI:57834"/>
    </ligand>
</feature>
<feature type="binding site" evidence="1">
    <location>
        <position position="109"/>
    </location>
    <ligand>
        <name>S-methyl-5'-thioadenosine</name>
        <dbReference type="ChEBI" id="CHEBI:17509"/>
    </ligand>
</feature>
<feature type="binding site" evidence="1">
    <location>
        <begin position="141"/>
        <end position="142"/>
    </location>
    <ligand>
        <name>S-methyl-5'-thioadenosine</name>
        <dbReference type="ChEBI" id="CHEBI:17509"/>
    </ligand>
</feature>
<gene>
    <name evidence="1" type="primary">speE</name>
    <name type="ordered locus">SSO0757</name>
</gene>
<keyword id="KW-0963">Cytoplasm</keyword>
<keyword id="KW-0620">Polyamine biosynthesis</keyword>
<keyword id="KW-1185">Reference proteome</keyword>
<keyword id="KW-0745">Spermidine biosynthesis</keyword>
<keyword id="KW-0808">Transferase</keyword>
<reference key="1">
    <citation type="journal article" date="2000" name="Genome">
        <title>Gene content and organization of a 281-kbp contig from the genome of the extremely thermophilic archaeon, Sulfolobus solfataricus P2.</title>
        <authorList>
            <person name="Charlebois R.L."/>
            <person name="Singh R.K."/>
            <person name="Chan-Weiher C.C.-Y."/>
            <person name="Allard G."/>
            <person name="Chow C."/>
            <person name="Confalonieri F."/>
            <person name="Curtis B."/>
            <person name="Duguet M."/>
            <person name="Erauso G."/>
            <person name="Faguy D."/>
            <person name="Gaasterland T."/>
            <person name="Garrett R.A."/>
            <person name="Gordon P."/>
            <person name="Jeffries A.C."/>
            <person name="Kozera C."/>
            <person name="Kushwaha N."/>
            <person name="Lafleur E."/>
            <person name="Medina N."/>
            <person name="Peng X."/>
            <person name="Penny S.L."/>
            <person name="She Q."/>
            <person name="St Jean A."/>
            <person name="van der Oost J."/>
            <person name="Young F."/>
            <person name="Zivanovic Y."/>
            <person name="Doolittle W.F."/>
            <person name="Ragan M.A."/>
            <person name="Sensen C.W."/>
        </authorList>
    </citation>
    <scope>NUCLEOTIDE SEQUENCE [LARGE SCALE GENOMIC DNA]</scope>
    <source>
        <strain>ATCC 35092 / DSM 1617 / JCM 11322 / P2</strain>
    </source>
</reference>
<reference key="2">
    <citation type="journal article" date="2001" name="Proc. Natl. Acad. Sci. U.S.A.">
        <title>The complete genome of the crenarchaeon Sulfolobus solfataricus P2.</title>
        <authorList>
            <person name="She Q."/>
            <person name="Singh R.K."/>
            <person name="Confalonieri F."/>
            <person name="Zivanovic Y."/>
            <person name="Allard G."/>
            <person name="Awayez M.J."/>
            <person name="Chan-Weiher C.C.-Y."/>
            <person name="Clausen I.G."/>
            <person name="Curtis B.A."/>
            <person name="De Moors A."/>
            <person name="Erauso G."/>
            <person name="Fletcher C."/>
            <person name="Gordon P.M.K."/>
            <person name="Heikamp-de Jong I."/>
            <person name="Jeffries A.C."/>
            <person name="Kozera C.J."/>
            <person name="Medina N."/>
            <person name="Peng X."/>
            <person name="Thi-Ngoc H.P."/>
            <person name="Redder P."/>
            <person name="Schenk M.E."/>
            <person name="Theriault C."/>
            <person name="Tolstrup N."/>
            <person name="Charlebois R.L."/>
            <person name="Doolittle W.F."/>
            <person name="Duguet M."/>
            <person name="Gaasterland T."/>
            <person name="Garrett R.A."/>
            <person name="Ragan M.A."/>
            <person name="Sensen C.W."/>
            <person name="Van der Oost J."/>
        </authorList>
    </citation>
    <scope>NUCLEOTIDE SEQUENCE [LARGE SCALE GENOMIC DNA]</scope>
    <source>
        <strain>ATCC 35092 / DSM 1617 / JCM 11322 / P2</strain>
    </source>
</reference>
<reference key="3">
    <citation type="journal article" date="1986" name="Eur. J. Biochem.">
        <title>Purification and characterization of propylamine transferase from Sulfolobus solfataricus, an extreme thermophilic archaebacterium.</title>
        <authorList>
            <person name="Cacciapuoti G."/>
            <person name="Porcelli M."/>
            <person name="Carteni-Farina M."/>
            <person name="Gambacorta A."/>
            <person name="Zappia V."/>
        </authorList>
    </citation>
    <scope>FUNCTION</scope>
    <scope>CATALYTIC ACTIVITY</scope>
    <scope>BIOPHYSICOCHEMICAL PROPERTIES</scope>
    <scope>ACTIVITY REGULATION</scope>
    <scope>SUBSTRATE SPECIFICITY</scope>
    <scope>SUBUNIT</scope>
    <scope>REACTION MECHANISM</scope>
</reference>
<reference key="4">
    <citation type="journal article" date="1992" name="Eur. J. Biochem.">
        <title>Effect of temperature on the propylamine transferase from Sulfolobus solfataricus, an extreme thermophilic archaebacterium. 1. Conformational behavior of the oligomeric enzyme in solution.</title>
        <authorList>
            <person name="Facchiano F."/>
            <person name="Ragone R."/>
            <person name="Porcelli M."/>
            <person name="Cacciapuoti G."/>
            <person name="Colonna G."/>
        </authorList>
    </citation>
    <scope>BIOPHYSICOCHEMICAL PROPERTIES</scope>
    <scope>SUBUNIT</scope>
</reference>
<reference key="5">
    <citation type="journal article" date="1992" name="Eur. J. Biochem.">
        <title>Effect of temperature on the propylamine transferase from Sulfolobus solfataricus, an extreme thermophilic archaebacterium. 2. Denaturation and structural stability.</title>
        <authorList>
            <person name="Ragone R."/>
            <person name="Facchiano F."/>
            <person name="Cacciapuoti G."/>
            <person name="Porcelli M."/>
            <person name="Colonna G."/>
        </authorList>
    </citation>
    <scope>BIOPHYSICOCHEMICAL PROPERTIES</scope>
</reference>
<name>SPEE_SACS2</name>
<accession>Q9UXE4</accession>